<organism>
    <name type="scientific">Escherichia coli O157:H7 (strain EC4115 / EHEC)</name>
    <dbReference type="NCBI Taxonomy" id="444450"/>
    <lineage>
        <taxon>Bacteria</taxon>
        <taxon>Pseudomonadati</taxon>
        <taxon>Pseudomonadota</taxon>
        <taxon>Gammaproteobacteria</taxon>
        <taxon>Enterobacterales</taxon>
        <taxon>Enterobacteriaceae</taxon>
        <taxon>Escherichia</taxon>
    </lineage>
</organism>
<dbReference type="EMBL" id="CP001164">
    <property type="protein sequence ID" value="ACI35711.1"/>
    <property type="molecule type" value="Genomic_DNA"/>
</dbReference>
<dbReference type="RefSeq" id="WP_000102327.1">
    <property type="nucleotide sequence ID" value="NC_011353.1"/>
</dbReference>
<dbReference type="KEGG" id="ecf:ECH74115_5183"/>
<dbReference type="HOGENOM" id="CLU_008142_4_2_6"/>
<dbReference type="GO" id="GO:0005886">
    <property type="term" value="C:plasma membrane"/>
    <property type="evidence" value="ECO:0007669"/>
    <property type="project" value="UniProtKB-SubCell"/>
</dbReference>
<dbReference type="GO" id="GO:0015079">
    <property type="term" value="F:potassium ion transmembrane transporter activity"/>
    <property type="evidence" value="ECO:0007669"/>
    <property type="project" value="UniProtKB-UniRule"/>
</dbReference>
<dbReference type="GO" id="GO:0015293">
    <property type="term" value="F:symporter activity"/>
    <property type="evidence" value="ECO:0007669"/>
    <property type="project" value="UniProtKB-UniRule"/>
</dbReference>
<dbReference type="HAMAP" id="MF_01522">
    <property type="entry name" value="Kup"/>
    <property type="match status" value="1"/>
</dbReference>
<dbReference type="InterPro" id="IPR003855">
    <property type="entry name" value="K+_transporter"/>
</dbReference>
<dbReference type="InterPro" id="IPR053952">
    <property type="entry name" value="K_trans_C"/>
</dbReference>
<dbReference type="InterPro" id="IPR053951">
    <property type="entry name" value="K_trans_N"/>
</dbReference>
<dbReference type="InterPro" id="IPR023051">
    <property type="entry name" value="Kup"/>
</dbReference>
<dbReference type="NCBIfam" id="TIGR00794">
    <property type="entry name" value="kup"/>
    <property type="match status" value="1"/>
</dbReference>
<dbReference type="NCBIfam" id="NF008015">
    <property type="entry name" value="PRK10745.1"/>
    <property type="match status" value="1"/>
</dbReference>
<dbReference type="PANTHER" id="PTHR30540:SF79">
    <property type="entry name" value="LOW AFFINITY POTASSIUM TRANSPORT SYSTEM PROTEIN KUP"/>
    <property type="match status" value="1"/>
</dbReference>
<dbReference type="PANTHER" id="PTHR30540">
    <property type="entry name" value="OSMOTIC STRESS POTASSIUM TRANSPORTER"/>
    <property type="match status" value="1"/>
</dbReference>
<dbReference type="Pfam" id="PF02705">
    <property type="entry name" value="K_trans"/>
    <property type="match status" value="1"/>
</dbReference>
<dbReference type="Pfam" id="PF22776">
    <property type="entry name" value="K_trans_C"/>
    <property type="match status" value="1"/>
</dbReference>
<evidence type="ECO:0000255" key="1">
    <source>
        <dbReference type="HAMAP-Rule" id="MF_01522"/>
    </source>
</evidence>
<comment type="function">
    <text evidence="1">Responsible for the low-affinity transport of potassium into the cell. Likely operates as a K(+):H(+) symporter.</text>
</comment>
<comment type="catalytic activity">
    <reaction evidence="1">
        <text>K(+)(in) + H(+)(in) = K(+)(out) + H(+)(out)</text>
        <dbReference type="Rhea" id="RHEA:28490"/>
        <dbReference type="ChEBI" id="CHEBI:15378"/>
        <dbReference type="ChEBI" id="CHEBI:29103"/>
    </reaction>
    <physiologicalReaction direction="right-to-left" evidence="1">
        <dbReference type="Rhea" id="RHEA:28492"/>
    </physiologicalReaction>
</comment>
<comment type="subcellular location">
    <subcellularLocation>
        <location evidence="1">Cell inner membrane</location>
        <topology evidence="1">Multi-pass membrane protein</topology>
    </subcellularLocation>
</comment>
<comment type="similarity">
    <text evidence="1">Belongs to the HAK/KUP transporter (TC 2.A.72) family.</text>
</comment>
<proteinExistence type="inferred from homology"/>
<sequence>MSTDNKQSLPAITLAAIGVVYGDIGTSPLYTLRECLSGQFGFGVERDAVFGFLSLIFWLLIFVVSIKYLTFVMRADNAGEGGILTLMSLAGRNTSARTTSMLVIMGLIGGSFFYGEVVITPAISVMSAIEGLEIVAPQLDTWIVPLSIIVLTLLFMIQKHGTAMVGKLFAPIMLTWFLILAGLGLRSIIANQEVLYALNPMWAVHFFLEYKTVSFIALGAVVLSITGGEALYADMGHFGKFPIRLAWFTVVLPSLTLNYFGQGALLLKNPEAIKNPFFLLAPDWALIPLLIIAALATVIASQAVISGVFSLTRQAVRLGYLSPMRIIHTSEMESGQIYIPFVNWMLYVAVVIVIVSFEHSSNLAAAYGIAVTGTMVLTSILSTTVARQNWHWNKYFVALILIAFLCVDIPLFTANLDKLLSGGWLPLSLGTVMFIVMTTWKSERFRLLRRMHEHGNSLEAMIASLEKSPPVRVPGTAVYMSRAINVIPFALMHNLKHNKVLHERVILLTLRTEDAPYVHNVRRVQIEQLSPTFWRVVASYGWRETPNVEEVFHRCGLEGLSCRMMETSFFMSHESLILGKRPWYLRLRGKLYLLLQRNALRAPDQFEIPPNRVIELGTQVEI</sequence>
<reference key="1">
    <citation type="journal article" date="2011" name="Proc. Natl. Acad. Sci. U.S.A.">
        <title>Genomic anatomy of Escherichia coli O157:H7 outbreaks.</title>
        <authorList>
            <person name="Eppinger M."/>
            <person name="Mammel M.K."/>
            <person name="Leclerc J.E."/>
            <person name="Ravel J."/>
            <person name="Cebula T.A."/>
        </authorList>
    </citation>
    <scope>NUCLEOTIDE SEQUENCE [LARGE SCALE GENOMIC DNA]</scope>
    <source>
        <strain>EC4115 / EHEC</strain>
    </source>
</reference>
<gene>
    <name evidence="1" type="primary">kup</name>
    <name type="ordered locus">ECH74115_5183</name>
</gene>
<keyword id="KW-0997">Cell inner membrane</keyword>
<keyword id="KW-1003">Cell membrane</keyword>
<keyword id="KW-0406">Ion transport</keyword>
<keyword id="KW-0472">Membrane</keyword>
<keyword id="KW-0630">Potassium</keyword>
<keyword id="KW-0633">Potassium transport</keyword>
<keyword id="KW-0769">Symport</keyword>
<keyword id="KW-0812">Transmembrane</keyword>
<keyword id="KW-1133">Transmembrane helix</keyword>
<keyword id="KW-0813">Transport</keyword>
<feature type="chain" id="PRO_1000190265" description="Low affinity potassium transport system protein Kup">
    <location>
        <begin position="1"/>
        <end position="622"/>
    </location>
</feature>
<feature type="transmembrane region" description="Helical" evidence="1">
    <location>
        <begin position="9"/>
        <end position="29"/>
    </location>
</feature>
<feature type="transmembrane region" description="Helical" evidence="1">
    <location>
        <begin position="49"/>
        <end position="69"/>
    </location>
</feature>
<feature type="transmembrane region" description="Helical" evidence="1">
    <location>
        <begin position="103"/>
        <end position="123"/>
    </location>
</feature>
<feature type="transmembrane region" description="Helical" evidence="1">
    <location>
        <begin position="137"/>
        <end position="157"/>
    </location>
</feature>
<feature type="transmembrane region" description="Helical" evidence="1">
    <location>
        <begin position="165"/>
        <end position="185"/>
    </location>
</feature>
<feature type="transmembrane region" description="Helical" evidence="1">
    <location>
        <begin position="213"/>
        <end position="233"/>
    </location>
</feature>
<feature type="transmembrane region" description="Helical" evidence="1">
    <location>
        <begin position="247"/>
        <end position="267"/>
    </location>
</feature>
<feature type="transmembrane region" description="Helical" evidence="1">
    <location>
        <begin position="276"/>
        <end position="296"/>
    </location>
</feature>
<feature type="transmembrane region" description="Helical" evidence="1">
    <location>
        <begin position="337"/>
        <end position="357"/>
    </location>
</feature>
<feature type="transmembrane region" description="Helical" evidence="1">
    <location>
        <begin position="363"/>
        <end position="383"/>
    </location>
</feature>
<feature type="transmembrane region" description="Helical" evidence="1">
    <location>
        <begin position="396"/>
        <end position="416"/>
    </location>
</feature>
<feature type="transmembrane region" description="Helical" evidence="1">
    <location>
        <begin position="419"/>
        <end position="439"/>
    </location>
</feature>
<accession>B5YY05</accession>
<protein>
    <recommendedName>
        <fullName evidence="1">Low affinity potassium transport system protein Kup</fullName>
    </recommendedName>
    <alternativeName>
        <fullName evidence="1">Kup system potassium uptake protein</fullName>
    </alternativeName>
</protein>
<name>KUP_ECO5E</name>